<feature type="chain" id="PRO_1000006692" description="Aspartate--tRNA ligase">
    <location>
        <begin position="1"/>
        <end position="590"/>
    </location>
</feature>
<feature type="region of interest" description="Aspartate" evidence="1">
    <location>
        <begin position="198"/>
        <end position="201"/>
    </location>
</feature>
<feature type="binding site" evidence="1">
    <location>
        <position position="174"/>
    </location>
    <ligand>
        <name>L-aspartate</name>
        <dbReference type="ChEBI" id="CHEBI:29991"/>
    </ligand>
</feature>
<feature type="binding site" evidence="1">
    <location>
        <begin position="220"/>
        <end position="222"/>
    </location>
    <ligand>
        <name>ATP</name>
        <dbReference type="ChEBI" id="CHEBI:30616"/>
    </ligand>
</feature>
<feature type="binding site" evidence="1">
    <location>
        <position position="220"/>
    </location>
    <ligand>
        <name>L-aspartate</name>
        <dbReference type="ChEBI" id="CHEBI:29991"/>
    </ligand>
</feature>
<feature type="binding site" evidence="1">
    <location>
        <position position="229"/>
    </location>
    <ligand>
        <name>ATP</name>
        <dbReference type="ChEBI" id="CHEBI:30616"/>
    </ligand>
</feature>
<feature type="binding site" evidence="1">
    <location>
        <position position="443"/>
    </location>
    <ligand>
        <name>L-aspartate</name>
        <dbReference type="ChEBI" id="CHEBI:29991"/>
    </ligand>
</feature>
<feature type="binding site" evidence="1">
    <location>
        <position position="484"/>
    </location>
    <ligand>
        <name>ATP</name>
        <dbReference type="ChEBI" id="CHEBI:30616"/>
    </ligand>
</feature>
<feature type="binding site" evidence="1">
    <location>
        <position position="491"/>
    </location>
    <ligand>
        <name>L-aspartate</name>
        <dbReference type="ChEBI" id="CHEBI:29991"/>
    </ligand>
</feature>
<feature type="binding site" evidence="1">
    <location>
        <begin position="536"/>
        <end position="539"/>
    </location>
    <ligand>
        <name>ATP</name>
        <dbReference type="ChEBI" id="CHEBI:30616"/>
    </ligand>
</feature>
<sequence length="590" mass="66543">MKRTNYAGNITEEYLNQTITVKGWVAKRRNLGGLIFIDLRDREGIVQIVVNPETAATEVAEAADKARNEFVLEVTGKVVERASKNDKIKTGGIEIEATAIEILSTSKTTPFEIKDDVEVLDDTRLKYRYLDLRRPEMLKNITMRHATTRSIREYLDGAGFIDVETPFLNKSTPEGARDYLVPSRVNKGEFYALPQSPQLMKQLLMTAGLDRYYQIVKCFRDEDLRGDRQPEFTQVDLETSFLGEEEIQELTEELIAKVMKDVKGIDVTLPFPRMNYDDAMNFYGSDKPDTRFELLLTDLSALAKTVDFKVFQEAEVVKAIVVKGAADKYSRKSIDKLTEQAKQNGAKGLAWVKFEKGEFAGGISKFLAESTDSFVNELKLTDNDLVLFVADSLDVANSALGALRLTIGKQQGLIDFRKFNFLWVIDWPMFEWSDEEERYMSAHHPFTLPTKETQAFLSADGHRKDSDLKKVRAHAYDIVLNGYELGGGSLRINSRDLQEEMLSALGFKLEDANEQFGFLLEALDYGFPPHGGLALGLDRFVMLLAGKDNIREVIAFPKNNKASDPMTQAPSIVADKQLEELSIKLANKDQ</sequence>
<reference key="1">
    <citation type="journal article" date="2006" name="Proc. Natl. Acad. Sci. U.S.A.">
        <title>Comparative genomics of the lactic acid bacteria.</title>
        <authorList>
            <person name="Makarova K.S."/>
            <person name="Slesarev A."/>
            <person name="Wolf Y.I."/>
            <person name="Sorokin A."/>
            <person name="Mirkin B."/>
            <person name="Koonin E.V."/>
            <person name="Pavlov A."/>
            <person name="Pavlova N."/>
            <person name="Karamychev V."/>
            <person name="Polouchine N."/>
            <person name="Shakhova V."/>
            <person name="Grigoriev I."/>
            <person name="Lou Y."/>
            <person name="Rohksar D."/>
            <person name="Lucas S."/>
            <person name="Huang K."/>
            <person name="Goodstein D.M."/>
            <person name="Hawkins T."/>
            <person name="Plengvidhya V."/>
            <person name="Welker D."/>
            <person name="Hughes J."/>
            <person name="Goh Y."/>
            <person name="Benson A."/>
            <person name="Baldwin K."/>
            <person name="Lee J.-H."/>
            <person name="Diaz-Muniz I."/>
            <person name="Dosti B."/>
            <person name="Smeianov V."/>
            <person name="Wechter W."/>
            <person name="Barabote R."/>
            <person name="Lorca G."/>
            <person name="Altermann E."/>
            <person name="Barrangou R."/>
            <person name="Ganesan B."/>
            <person name="Xie Y."/>
            <person name="Rawsthorne H."/>
            <person name="Tamir D."/>
            <person name="Parker C."/>
            <person name="Breidt F."/>
            <person name="Broadbent J.R."/>
            <person name="Hutkins R."/>
            <person name="O'Sullivan D."/>
            <person name="Steele J."/>
            <person name="Unlu G."/>
            <person name="Saier M.H. Jr."/>
            <person name="Klaenhammer T."/>
            <person name="Richardson P."/>
            <person name="Kozyavkin S."/>
            <person name="Weimer B.C."/>
            <person name="Mills D.A."/>
        </authorList>
    </citation>
    <scope>NUCLEOTIDE SEQUENCE [LARGE SCALE GENOMIC DNA]</scope>
    <source>
        <strain>SK11</strain>
    </source>
</reference>
<keyword id="KW-0030">Aminoacyl-tRNA synthetase</keyword>
<keyword id="KW-0067">ATP-binding</keyword>
<keyword id="KW-0963">Cytoplasm</keyword>
<keyword id="KW-0436">Ligase</keyword>
<keyword id="KW-0547">Nucleotide-binding</keyword>
<keyword id="KW-0648">Protein biosynthesis</keyword>
<dbReference type="EC" id="6.1.1.12" evidence="1"/>
<dbReference type="EMBL" id="CP000425">
    <property type="protein sequence ID" value="ABJ73682.1"/>
    <property type="molecule type" value="Genomic_DNA"/>
</dbReference>
<dbReference type="RefSeq" id="WP_011677017.1">
    <property type="nucleotide sequence ID" value="NC_008527.1"/>
</dbReference>
<dbReference type="SMR" id="Q02WJ0"/>
<dbReference type="KEGG" id="llc:LACR_2226"/>
<dbReference type="HOGENOM" id="CLU_014330_3_2_9"/>
<dbReference type="Proteomes" id="UP000000240">
    <property type="component" value="Chromosome"/>
</dbReference>
<dbReference type="GO" id="GO:0005737">
    <property type="term" value="C:cytoplasm"/>
    <property type="evidence" value="ECO:0007669"/>
    <property type="project" value="UniProtKB-SubCell"/>
</dbReference>
<dbReference type="GO" id="GO:0004815">
    <property type="term" value="F:aspartate-tRNA ligase activity"/>
    <property type="evidence" value="ECO:0007669"/>
    <property type="project" value="UniProtKB-UniRule"/>
</dbReference>
<dbReference type="GO" id="GO:0005524">
    <property type="term" value="F:ATP binding"/>
    <property type="evidence" value="ECO:0007669"/>
    <property type="project" value="UniProtKB-UniRule"/>
</dbReference>
<dbReference type="GO" id="GO:0140096">
    <property type="term" value="F:catalytic activity, acting on a protein"/>
    <property type="evidence" value="ECO:0007669"/>
    <property type="project" value="UniProtKB-ARBA"/>
</dbReference>
<dbReference type="GO" id="GO:0003676">
    <property type="term" value="F:nucleic acid binding"/>
    <property type="evidence" value="ECO:0007669"/>
    <property type="project" value="InterPro"/>
</dbReference>
<dbReference type="GO" id="GO:0016740">
    <property type="term" value="F:transferase activity"/>
    <property type="evidence" value="ECO:0007669"/>
    <property type="project" value="UniProtKB-ARBA"/>
</dbReference>
<dbReference type="GO" id="GO:0006422">
    <property type="term" value="P:aspartyl-tRNA aminoacylation"/>
    <property type="evidence" value="ECO:0007669"/>
    <property type="project" value="UniProtKB-UniRule"/>
</dbReference>
<dbReference type="CDD" id="cd00777">
    <property type="entry name" value="AspRS_core"/>
    <property type="match status" value="1"/>
</dbReference>
<dbReference type="CDD" id="cd04317">
    <property type="entry name" value="EcAspRS_like_N"/>
    <property type="match status" value="1"/>
</dbReference>
<dbReference type="Gene3D" id="3.30.930.10">
    <property type="entry name" value="Bira Bifunctional Protein, Domain 2"/>
    <property type="match status" value="1"/>
</dbReference>
<dbReference type="Gene3D" id="3.30.1360.30">
    <property type="entry name" value="GAD-like domain"/>
    <property type="match status" value="1"/>
</dbReference>
<dbReference type="Gene3D" id="2.40.50.140">
    <property type="entry name" value="Nucleic acid-binding proteins"/>
    <property type="match status" value="1"/>
</dbReference>
<dbReference type="HAMAP" id="MF_00044">
    <property type="entry name" value="Asp_tRNA_synth_type1"/>
    <property type="match status" value="1"/>
</dbReference>
<dbReference type="InterPro" id="IPR004364">
    <property type="entry name" value="Aa-tRNA-synt_II"/>
</dbReference>
<dbReference type="InterPro" id="IPR006195">
    <property type="entry name" value="aa-tRNA-synth_II"/>
</dbReference>
<dbReference type="InterPro" id="IPR045864">
    <property type="entry name" value="aa-tRNA-synth_II/BPL/LPL"/>
</dbReference>
<dbReference type="InterPro" id="IPR004524">
    <property type="entry name" value="Asp-tRNA-ligase_1"/>
</dbReference>
<dbReference type="InterPro" id="IPR047089">
    <property type="entry name" value="Asp-tRNA-ligase_1_N"/>
</dbReference>
<dbReference type="InterPro" id="IPR002312">
    <property type="entry name" value="Asp/Asn-tRNA-synth_IIb"/>
</dbReference>
<dbReference type="InterPro" id="IPR047090">
    <property type="entry name" value="AspRS_core"/>
</dbReference>
<dbReference type="InterPro" id="IPR004115">
    <property type="entry name" value="GAD-like_sf"/>
</dbReference>
<dbReference type="InterPro" id="IPR029351">
    <property type="entry name" value="GAD_dom"/>
</dbReference>
<dbReference type="InterPro" id="IPR012340">
    <property type="entry name" value="NA-bd_OB-fold"/>
</dbReference>
<dbReference type="InterPro" id="IPR004365">
    <property type="entry name" value="NA-bd_OB_tRNA"/>
</dbReference>
<dbReference type="NCBIfam" id="TIGR00459">
    <property type="entry name" value="aspS_bact"/>
    <property type="match status" value="1"/>
</dbReference>
<dbReference type="NCBIfam" id="NF001750">
    <property type="entry name" value="PRK00476.1"/>
    <property type="match status" value="1"/>
</dbReference>
<dbReference type="PANTHER" id="PTHR22594:SF5">
    <property type="entry name" value="ASPARTATE--TRNA LIGASE, MITOCHONDRIAL"/>
    <property type="match status" value="1"/>
</dbReference>
<dbReference type="PANTHER" id="PTHR22594">
    <property type="entry name" value="ASPARTYL/LYSYL-TRNA SYNTHETASE"/>
    <property type="match status" value="1"/>
</dbReference>
<dbReference type="Pfam" id="PF02938">
    <property type="entry name" value="GAD"/>
    <property type="match status" value="1"/>
</dbReference>
<dbReference type="Pfam" id="PF00152">
    <property type="entry name" value="tRNA-synt_2"/>
    <property type="match status" value="1"/>
</dbReference>
<dbReference type="Pfam" id="PF01336">
    <property type="entry name" value="tRNA_anti-codon"/>
    <property type="match status" value="1"/>
</dbReference>
<dbReference type="PRINTS" id="PR01042">
    <property type="entry name" value="TRNASYNTHASP"/>
</dbReference>
<dbReference type="SUPFAM" id="SSF55681">
    <property type="entry name" value="Class II aaRS and biotin synthetases"/>
    <property type="match status" value="1"/>
</dbReference>
<dbReference type="SUPFAM" id="SSF55261">
    <property type="entry name" value="GAD domain-like"/>
    <property type="match status" value="1"/>
</dbReference>
<dbReference type="SUPFAM" id="SSF50249">
    <property type="entry name" value="Nucleic acid-binding proteins"/>
    <property type="match status" value="1"/>
</dbReference>
<dbReference type="PROSITE" id="PS50862">
    <property type="entry name" value="AA_TRNA_LIGASE_II"/>
    <property type="match status" value="1"/>
</dbReference>
<proteinExistence type="inferred from homology"/>
<evidence type="ECO:0000255" key="1">
    <source>
        <dbReference type="HAMAP-Rule" id="MF_00044"/>
    </source>
</evidence>
<organism>
    <name type="scientific">Lactococcus lactis subsp. cremoris (strain SK11)</name>
    <dbReference type="NCBI Taxonomy" id="272622"/>
    <lineage>
        <taxon>Bacteria</taxon>
        <taxon>Bacillati</taxon>
        <taxon>Bacillota</taxon>
        <taxon>Bacilli</taxon>
        <taxon>Lactobacillales</taxon>
        <taxon>Streptococcaceae</taxon>
        <taxon>Lactococcus</taxon>
        <taxon>Lactococcus cremoris subsp. cremoris</taxon>
    </lineage>
</organism>
<protein>
    <recommendedName>
        <fullName evidence="1">Aspartate--tRNA ligase</fullName>
        <ecNumber evidence="1">6.1.1.12</ecNumber>
    </recommendedName>
    <alternativeName>
        <fullName evidence="1">Aspartyl-tRNA synthetase</fullName>
        <shortName evidence="1">AspRS</shortName>
    </alternativeName>
</protein>
<comment type="function">
    <text evidence="1">Catalyzes the attachment of L-aspartate to tRNA(Asp) in a two-step reaction: L-aspartate is first activated by ATP to form Asp-AMP and then transferred to the acceptor end of tRNA(Asp).</text>
</comment>
<comment type="catalytic activity">
    <reaction evidence="1">
        <text>tRNA(Asp) + L-aspartate + ATP = L-aspartyl-tRNA(Asp) + AMP + diphosphate</text>
        <dbReference type="Rhea" id="RHEA:19649"/>
        <dbReference type="Rhea" id="RHEA-COMP:9660"/>
        <dbReference type="Rhea" id="RHEA-COMP:9678"/>
        <dbReference type="ChEBI" id="CHEBI:29991"/>
        <dbReference type="ChEBI" id="CHEBI:30616"/>
        <dbReference type="ChEBI" id="CHEBI:33019"/>
        <dbReference type="ChEBI" id="CHEBI:78442"/>
        <dbReference type="ChEBI" id="CHEBI:78516"/>
        <dbReference type="ChEBI" id="CHEBI:456215"/>
        <dbReference type="EC" id="6.1.1.12"/>
    </reaction>
</comment>
<comment type="subunit">
    <text evidence="1">Homodimer.</text>
</comment>
<comment type="subcellular location">
    <subcellularLocation>
        <location evidence="1">Cytoplasm</location>
    </subcellularLocation>
</comment>
<comment type="similarity">
    <text evidence="1">Belongs to the class-II aminoacyl-tRNA synthetase family. Type 1 subfamily.</text>
</comment>
<name>SYD_LACLS</name>
<gene>
    <name evidence="1" type="primary">aspS</name>
    <name type="ordered locus">LACR_2226</name>
</gene>
<accession>Q02WJ0</accession>